<gene>
    <name evidence="1" type="primary">mntH</name>
    <name type="ordered locus">SSON_2484</name>
</gene>
<proteinExistence type="inferred from homology"/>
<feature type="chain" id="PRO_1000024111" description="Divalent metal cation transporter MntH">
    <location>
        <begin position="1"/>
        <end position="412"/>
    </location>
</feature>
<feature type="topological domain" description="Cytoplasmic" evidence="1">
    <location>
        <begin position="1"/>
        <end position="19"/>
    </location>
</feature>
<feature type="transmembrane region" description="Helical" evidence="1">
    <location>
        <begin position="20"/>
        <end position="39"/>
    </location>
</feature>
<feature type="topological domain" description="Periplasmic" evidence="1">
    <location>
        <begin position="40"/>
        <end position="51"/>
    </location>
</feature>
<feature type="transmembrane region" description="Helical" evidence="1">
    <location>
        <begin position="52"/>
        <end position="71"/>
    </location>
</feature>
<feature type="topological domain" description="Cytoplasmic" evidence="1">
    <location>
        <begin position="72"/>
        <end position="95"/>
    </location>
</feature>
<feature type="transmembrane region" description="Helical" evidence="1">
    <location>
        <begin position="96"/>
        <end position="118"/>
    </location>
</feature>
<feature type="topological domain" description="Periplasmic" evidence="1">
    <location>
        <begin position="119"/>
        <end position="125"/>
    </location>
</feature>
<feature type="transmembrane region" description="Helical" evidence="1">
    <location>
        <begin position="126"/>
        <end position="145"/>
    </location>
</feature>
<feature type="topological domain" description="Cytoplasmic" evidence="1">
    <location>
        <begin position="146"/>
        <end position="155"/>
    </location>
</feature>
<feature type="transmembrane region" description="Helical" evidence="1">
    <location>
        <begin position="156"/>
        <end position="175"/>
    </location>
</feature>
<feature type="topological domain" description="Periplasmic" evidence="1">
    <location>
        <begin position="176"/>
        <end position="196"/>
    </location>
</feature>
<feature type="transmembrane region" description="Helical" evidence="1">
    <location>
        <begin position="197"/>
        <end position="220"/>
    </location>
</feature>
<feature type="topological domain" description="Cytoplasmic" evidence="1">
    <location>
        <begin position="221"/>
        <end position="238"/>
    </location>
</feature>
<feature type="transmembrane region" description="Helical" evidence="1">
    <location>
        <begin position="239"/>
        <end position="258"/>
    </location>
</feature>
<feature type="topological domain" description="Periplasmic" evidence="1">
    <location>
        <begin position="259"/>
        <end position="276"/>
    </location>
</feature>
<feature type="transmembrane region" description="Helical" evidence="1">
    <location>
        <begin position="277"/>
        <end position="297"/>
    </location>
</feature>
<feature type="topological domain" description="Cytoplasmic" evidence="1">
    <location>
        <begin position="298"/>
        <end position="327"/>
    </location>
</feature>
<feature type="transmembrane region" description="Helical" evidence="1">
    <location>
        <begin position="328"/>
        <end position="344"/>
    </location>
</feature>
<feature type="topological domain" description="Periplasmic" evidence="1">
    <location>
        <begin position="345"/>
        <end position="350"/>
    </location>
</feature>
<feature type="transmembrane region" description="Helical" evidence="1">
    <location>
        <begin position="351"/>
        <end position="370"/>
    </location>
</feature>
<feature type="topological domain" description="Cytoplasmic" evidence="1">
    <location>
        <begin position="371"/>
        <end position="387"/>
    </location>
</feature>
<feature type="transmembrane region" description="Helical" evidence="1">
    <location>
        <begin position="388"/>
        <end position="406"/>
    </location>
</feature>
<feature type="topological domain" description="Periplasmic" evidence="1">
    <location>
        <begin position="407"/>
        <end position="412"/>
    </location>
</feature>
<protein>
    <recommendedName>
        <fullName evidence="1">Divalent metal cation transporter MntH</fullName>
    </recommendedName>
</protein>
<accession>Q3YZE0</accession>
<reference key="1">
    <citation type="journal article" date="2005" name="Nucleic Acids Res.">
        <title>Genome dynamics and diversity of Shigella species, the etiologic agents of bacillary dysentery.</title>
        <authorList>
            <person name="Yang F."/>
            <person name="Yang J."/>
            <person name="Zhang X."/>
            <person name="Chen L."/>
            <person name="Jiang Y."/>
            <person name="Yan Y."/>
            <person name="Tang X."/>
            <person name="Wang J."/>
            <person name="Xiong Z."/>
            <person name="Dong J."/>
            <person name="Xue Y."/>
            <person name="Zhu Y."/>
            <person name="Xu X."/>
            <person name="Sun L."/>
            <person name="Chen S."/>
            <person name="Nie H."/>
            <person name="Peng J."/>
            <person name="Xu J."/>
            <person name="Wang Y."/>
            <person name="Yuan Z."/>
            <person name="Wen Y."/>
            <person name="Yao Z."/>
            <person name="Shen Y."/>
            <person name="Qiang B."/>
            <person name="Hou Y."/>
            <person name="Yu J."/>
            <person name="Jin Q."/>
        </authorList>
    </citation>
    <scope>NUCLEOTIDE SEQUENCE [LARGE SCALE GENOMIC DNA]</scope>
    <source>
        <strain>Ss046</strain>
    </source>
</reference>
<organism>
    <name type="scientific">Shigella sonnei (strain Ss046)</name>
    <dbReference type="NCBI Taxonomy" id="300269"/>
    <lineage>
        <taxon>Bacteria</taxon>
        <taxon>Pseudomonadati</taxon>
        <taxon>Pseudomonadota</taxon>
        <taxon>Gammaproteobacteria</taxon>
        <taxon>Enterobacterales</taxon>
        <taxon>Enterobacteriaceae</taxon>
        <taxon>Shigella</taxon>
    </lineage>
</organism>
<evidence type="ECO:0000255" key="1">
    <source>
        <dbReference type="HAMAP-Rule" id="MF_00221"/>
    </source>
</evidence>
<keyword id="KW-0997">Cell inner membrane</keyword>
<keyword id="KW-1003">Cell membrane</keyword>
<keyword id="KW-0406">Ion transport</keyword>
<keyword id="KW-0472">Membrane</keyword>
<keyword id="KW-1185">Reference proteome</keyword>
<keyword id="KW-0769">Symport</keyword>
<keyword id="KW-0812">Transmembrane</keyword>
<keyword id="KW-1133">Transmembrane helix</keyword>
<keyword id="KW-0813">Transport</keyword>
<dbReference type="EMBL" id="CP000038">
    <property type="protein sequence ID" value="AAZ89122.1"/>
    <property type="molecule type" value="Genomic_DNA"/>
</dbReference>
<dbReference type="RefSeq" id="WP_000186369.1">
    <property type="nucleotide sequence ID" value="NC_007384.1"/>
</dbReference>
<dbReference type="SMR" id="Q3YZE0"/>
<dbReference type="KEGG" id="ssn:SSON_2484"/>
<dbReference type="HOGENOM" id="CLU_020088_2_0_6"/>
<dbReference type="Proteomes" id="UP000002529">
    <property type="component" value="Chromosome"/>
</dbReference>
<dbReference type="GO" id="GO:0005886">
    <property type="term" value="C:plasma membrane"/>
    <property type="evidence" value="ECO:0007669"/>
    <property type="project" value="UniProtKB-SubCell"/>
</dbReference>
<dbReference type="GO" id="GO:0015086">
    <property type="term" value="F:cadmium ion transmembrane transporter activity"/>
    <property type="evidence" value="ECO:0007669"/>
    <property type="project" value="TreeGrafter"/>
</dbReference>
<dbReference type="GO" id="GO:0005384">
    <property type="term" value="F:manganese ion transmembrane transporter activity"/>
    <property type="evidence" value="ECO:0007669"/>
    <property type="project" value="TreeGrafter"/>
</dbReference>
<dbReference type="GO" id="GO:0046872">
    <property type="term" value="F:metal ion binding"/>
    <property type="evidence" value="ECO:0007669"/>
    <property type="project" value="UniProtKB-UniRule"/>
</dbReference>
<dbReference type="GO" id="GO:0015293">
    <property type="term" value="F:symporter activity"/>
    <property type="evidence" value="ECO:0007669"/>
    <property type="project" value="UniProtKB-UniRule"/>
</dbReference>
<dbReference type="GO" id="GO:0034755">
    <property type="term" value="P:iron ion transmembrane transport"/>
    <property type="evidence" value="ECO:0007669"/>
    <property type="project" value="TreeGrafter"/>
</dbReference>
<dbReference type="HAMAP" id="MF_00221">
    <property type="entry name" value="NRAMP"/>
    <property type="match status" value="1"/>
</dbReference>
<dbReference type="InterPro" id="IPR001046">
    <property type="entry name" value="NRAMP_fam"/>
</dbReference>
<dbReference type="NCBIfam" id="TIGR01197">
    <property type="entry name" value="nramp"/>
    <property type="match status" value="1"/>
</dbReference>
<dbReference type="NCBIfam" id="NF037982">
    <property type="entry name" value="Nramp_1"/>
    <property type="match status" value="1"/>
</dbReference>
<dbReference type="NCBIfam" id="NF001923">
    <property type="entry name" value="PRK00701.1"/>
    <property type="match status" value="1"/>
</dbReference>
<dbReference type="PANTHER" id="PTHR11706:SF33">
    <property type="entry name" value="NATURAL RESISTANCE-ASSOCIATED MACROPHAGE PROTEIN 2"/>
    <property type="match status" value="1"/>
</dbReference>
<dbReference type="PANTHER" id="PTHR11706">
    <property type="entry name" value="SOLUTE CARRIER PROTEIN FAMILY 11 MEMBER"/>
    <property type="match status" value="1"/>
</dbReference>
<dbReference type="Pfam" id="PF01566">
    <property type="entry name" value="Nramp"/>
    <property type="match status" value="1"/>
</dbReference>
<dbReference type="PRINTS" id="PR00447">
    <property type="entry name" value="NATRESASSCMP"/>
</dbReference>
<name>MNTH_SHISS</name>
<comment type="function">
    <text evidence="1">H(+)-stimulated, divalent metal cation uptake system.</text>
</comment>
<comment type="subcellular location">
    <subcellularLocation>
        <location evidence="1">Cell inner membrane</location>
        <topology evidence="1">Multi-pass membrane protein</topology>
    </subcellularLocation>
</comment>
<comment type="similarity">
    <text evidence="1">Belongs to the NRAMP family.</text>
</comment>
<sequence>MTNYRVESSSGRAARKMRLALMGPAFIAAIGYIDPGNFATNIQAGASFGYQLLWVVVWANLMAMLIQILSAKLGIATGKNLAEQIRDHYPRPVVWFYWVQAEIIAMATDLAEFIGAAIGFKLILGVSLLQGAVLTGIATFLILMLQRRGQKPLEKVIGGLLLFVAAAYIVELIFSQPNLAQLGKGMVIPSLPTSEAVFLAAGVLGATIMPHVIYLHSSLTQHLHGGSRQQRYSATKWDVAIAMTIAGFVNLAMMATAAAAFHFSGHTGVADLDEAYLTLQPLLSHAAATVFGLSLVAAGLSSTVVGTLAGQVVMQGFIRFHIPLWVRRTVTMLPSFIVILMGLDPTRILVMSQVLLSFGIALALVPLLIFTSDSKLMGDLVNSKRVKQTGWVIVVLVVALNIWLLVGTALGL</sequence>